<evidence type="ECO:0000250" key="1"/>
<evidence type="ECO:0000255" key="2">
    <source>
        <dbReference type="PROSITE-ProRule" id="PRU10020"/>
    </source>
</evidence>
<evidence type="ECO:0000305" key="3"/>
<keyword id="KW-0012">Acyltransferase</keyword>
<keyword id="KW-0963">Cytoplasm</keyword>
<keyword id="KW-0808">Transferase</keyword>
<gene>
    <name type="ordered locus">SAS0330</name>
</gene>
<proteinExistence type="inferred from homology"/>
<feature type="chain" id="PRO_0000270507" description="Probable acetyl-CoA acyltransferase">
    <location>
        <begin position="1"/>
        <end position="393"/>
    </location>
</feature>
<feature type="active site" description="Acyl-thioester intermediate" evidence="1">
    <location>
        <position position="88"/>
    </location>
</feature>
<feature type="active site" description="Proton acceptor" evidence="2">
    <location>
        <position position="349"/>
    </location>
</feature>
<feature type="active site" description="Proton acceptor" evidence="2">
    <location>
        <position position="378"/>
    </location>
</feature>
<sequence>MTRVVLAAAYRTPIGVFGGAFKDVPAYDLGATLIEHIIKETGLNPSEIDEVIIGNVLQAGQGQNPARIAAMKGGLPETVPAFTVNKVCGSGLKSIQLAYQSIVTGENDIVLAGGMENMSQSPMLVNNSRFGFKMGHQSMVDSMVYDGLTDVFNQYHMGITAENLVEQYGISREEQDTFAVNSQQKAVRAQQNGEFDSEIVPVSIPQRKGEPILVTKDEGVRENVSVEKLSRLRPAFKKDGTVTAGNASGINDGAAMMLVMSEDKAKELNIEPLAVLDGFGSHGVDPSIMGIAPVGAVEKALKRSKKELSDIDVFELNEAFAAQSLAVDRELKLPPEKVNVKGGAIALGHPIGASGARVLVTLLHQLNDEVETGLTSLCIGGGQAIAAVVSKYK</sequence>
<name>THLA_STAAS</name>
<accession>Q6GCB8</accession>
<protein>
    <recommendedName>
        <fullName>Probable acetyl-CoA acyltransferase</fullName>
        <ecNumber>2.3.1.9</ecNumber>
    </recommendedName>
    <alternativeName>
        <fullName>Acetoacetyl-CoA thiolase</fullName>
    </alternativeName>
</protein>
<organism>
    <name type="scientific">Staphylococcus aureus (strain MSSA476)</name>
    <dbReference type="NCBI Taxonomy" id="282459"/>
    <lineage>
        <taxon>Bacteria</taxon>
        <taxon>Bacillati</taxon>
        <taxon>Bacillota</taxon>
        <taxon>Bacilli</taxon>
        <taxon>Bacillales</taxon>
        <taxon>Staphylococcaceae</taxon>
        <taxon>Staphylococcus</taxon>
    </lineage>
</organism>
<comment type="catalytic activity">
    <reaction evidence="2">
        <text>2 acetyl-CoA = acetoacetyl-CoA + CoA</text>
        <dbReference type="Rhea" id="RHEA:21036"/>
        <dbReference type="ChEBI" id="CHEBI:57286"/>
        <dbReference type="ChEBI" id="CHEBI:57287"/>
        <dbReference type="ChEBI" id="CHEBI:57288"/>
        <dbReference type="EC" id="2.3.1.9"/>
    </reaction>
</comment>
<comment type="subcellular location">
    <subcellularLocation>
        <location evidence="1">Cytoplasm</location>
    </subcellularLocation>
</comment>
<comment type="similarity">
    <text evidence="3">Belongs to the thiolase-like superfamily. Thiolase family.</text>
</comment>
<dbReference type="EC" id="2.3.1.9"/>
<dbReference type="EMBL" id="BX571857">
    <property type="protein sequence ID" value="CAG42101.1"/>
    <property type="molecule type" value="Genomic_DNA"/>
</dbReference>
<dbReference type="RefSeq" id="WP_000199069.1">
    <property type="nucleotide sequence ID" value="NC_002953.3"/>
</dbReference>
<dbReference type="SMR" id="Q6GCB8"/>
<dbReference type="KEGG" id="sas:SAS0330"/>
<dbReference type="HOGENOM" id="CLU_031026_0_0_9"/>
<dbReference type="GO" id="GO:0005737">
    <property type="term" value="C:cytoplasm"/>
    <property type="evidence" value="ECO:0007669"/>
    <property type="project" value="UniProtKB-SubCell"/>
</dbReference>
<dbReference type="GO" id="GO:0003985">
    <property type="term" value="F:acetyl-CoA C-acetyltransferase activity"/>
    <property type="evidence" value="ECO:0007669"/>
    <property type="project" value="UniProtKB-EC"/>
</dbReference>
<dbReference type="CDD" id="cd00751">
    <property type="entry name" value="thiolase"/>
    <property type="match status" value="1"/>
</dbReference>
<dbReference type="FunFam" id="3.40.47.10:FF:000010">
    <property type="entry name" value="Acetyl-CoA acetyltransferase (Thiolase)"/>
    <property type="match status" value="1"/>
</dbReference>
<dbReference type="Gene3D" id="3.40.47.10">
    <property type="match status" value="2"/>
</dbReference>
<dbReference type="InterPro" id="IPR002155">
    <property type="entry name" value="Thiolase"/>
</dbReference>
<dbReference type="InterPro" id="IPR016039">
    <property type="entry name" value="Thiolase-like"/>
</dbReference>
<dbReference type="InterPro" id="IPR020615">
    <property type="entry name" value="Thiolase_acyl_enz_int_AS"/>
</dbReference>
<dbReference type="InterPro" id="IPR020610">
    <property type="entry name" value="Thiolase_AS"/>
</dbReference>
<dbReference type="InterPro" id="IPR020617">
    <property type="entry name" value="Thiolase_C"/>
</dbReference>
<dbReference type="InterPro" id="IPR020613">
    <property type="entry name" value="Thiolase_CS"/>
</dbReference>
<dbReference type="InterPro" id="IPR020616">
    <property type="entry name" value="Thiolase_N"/>
</dbReference>
<dbReference type="NCBIfam" id="TIGR01930">
    <property type="entry name" value="AcCoA-C-Actrans"/>
    <property type="match status" value="1"/>
</dbReference>
<dbReference type="PANTHER" id="PTHR18919:SF107">
    <property type="entry name" value="ACETYL-COA ACETYLTRANSFERASE, CYTOSOLIC"/>
    <property type="match status" value="1"/>
</dbReference>
<dbReference type="PANTHER" id="PTHR18919">
    <property type="entry name" value="ACETYL-COA C-ACYLTRANSFERASE"/>
    <property type="match status" value="1"/>
</dbReference>
<dbReference type="Pfam" id="PF02803">
    <property type="entry name" value="Thiolase_C"/>
    <property type="match status" value="1"/>
</dbReference>
<dbReference type="Pfam" id="PF00108">
    <property type="entry name" value="Thiolase_N"/>
    <property type="match status" value="1"/>
</dbReference>
<dbReference type="PIRSF" id="PIRSF000429">
    <property type="entry name" value="Ac-CoA_Ac_transf"/>
    <property type="match status" value="1"/>
</dbReference>
<dbReference type="SUPFAM" id="SSF53901">
    <property type="entry name" value="Thiolase-like"/>
    <property type="match status" value="2"/>
</dbReference>
<dbReference type="PROSITE" id="PS00098">
    <property type="entry name" value="THIOLASE_1"/>
    <property type="match status" value="1"/>
</dbReference>
<dbReference type="PROSITE" id="PS00737">
    <property type="entry name" value="THIOLASE_2"/>
    <property type="match status" value="1"/>
</dbReference>
<dbReference type="PROSITE" id="PS00099">
    <property type="entry name" value="THIOLASE_3"/>
    <property type="match status" value="1"/>
</dbReference>
<reference key="1">
    <citation type="journal article" date="2004" name="Proc. Natl. Acad. Sci. U.S.A.">
        <title>Complete genomes of two clinical Staphylococcus aureus strains: evidence for the rapid evolution of virulence and drug resistance.</title>
        <authorList>
            <person name="Holden M.T.G."/>
            <person name="Feil E.J."/>
            <person name="Lindsay J.A."/>
            <person name="Peacock S.J."/>
            <person name="Day N.P.J."/>
            <person name="Enright M.C."/>
            <person name="Foster T.J."/>
            <person name="Moore C.E."/>
            <person name="Hurst L."/>
            <person name="Atkin R."/>
            <person name="Barron A."/>
            <person name="Bason N."/>
            <person name="Bentley S.D."/>
            <person name="Chillingworth C."/>
            <person name="Chillingworth T."/>
            <person name="Churcher C."/>
            <person name="Clark L."/>
            <person name="Corton C."/>
            <person name="Cronin A."/>
            <person name="Doggett J."/>
            <person name="Dowd L."/>
            <person name="Feltwell T."/>
            <person name="Hance Z."/>
            <person name="Harris B."/>
            <person name="Hauser H."/>
            <person name="Holroyd S."/>
            <person name="Jagels K."/>
            <person name="James K.D."/>
            <person name="Lennard N."/>
            <person name="Line A."/>
            <person name="Mayes R."/>
            <person name="Moule S."/>
            <person name="Mungall K."/>
            <person name="Ormond D."/>
            <person name="Quail M.A."/>
            <person name="Rabbinowitsch E."/>
            <person name="Rutherford K.M."/>
            <person name="Sanders M."/>
            <person name="Sharp S."/>
            <person name="Simmonds M."/>
            <person name="Stevens K."/>
            <person name="Whitehead S."/>
            <person name="Barrell B.G."/>
            <person name="Spratt B.G."/>
            <person name="Parkhill J."/>
        </authorList>
    </citation>
    <scope>NUCLEOTIDE SEQUENCE [LARGE SCALE GENOMIC DNA]</scope>
    <source>
        <strain>MSSA476</strain>
    </source>
</reference>